<comment type="function">
    <text evidence="2">Mediates conversion of 2-sulfoacetaldehyde into sulfoacetate. The enzyme is specific for NAD; NADP is not a substrate. Part of a pathway that can utilize the amino group of taurine as a sole source of nitrogen for growth.</text>
</comment>
<comment type="catalytic activity">
    <reaction evidence="2">
        <text>sulfoacetaldehyde + NAD(+) + H2O = sulfoacetate + NADH + 2 H(+)</text>
        <dbReference type="Rhea" id="RHEA:25637"/>
        <dbReference type="ChEBI" id="CHEBI:15377"/>
        <dbReference type="ChEBI" id="CHEBI:15378"/>
        <dbReference type="ChEBI" id="CHEBI:57540"/>
        <dbReference type="ChEBI" id="CHEBI:57945"/>
        <dbReference type="ChEBI" id="CHEBI:58246"/>
        <dbReference type="ChEBI" id="CHEBI:58824"/>
        <dbReference type="EC" id="1.2.1.73"/>
    </reaction>
</comment>
<comment type="biophysicochemical properties">
    <kinetics>
        <KM evidence="2">0.12 mM for 2-sulfoacetaldehyde</KM>
        <KM evidence="2">0.49 mM for NAD</KM>
    </kinetics>
    <phDependence>
        <text evidence="2">Optimum pH is 9.0.</text>
    </phDependence>
</comment>
<comment type="subunit">
    <text evidence="2">Homotetramer.</text>
</comment>
<comment type="similarity">
    <text evidence="3">Belongs to the aldehyde dehydrogenase family.</text>
</comment>
<sequence length="456" mass="49258">MSNTYSLVNPFDNSPLGEYEYTPWATLENQLAMLKEGQLSQRKTAAFQRAGVLNKLAALLKEHSEEMATLITQETGKTILDSRVEMMRAYNAAIASAEEARQIQGESLDSDAYAPAGGKIGVVCWKPLGTILCITPFNFPINIAIHKIGPAYAAGNTILFKPGPQNTASAQLLVKLCYEAGMPENTLQLCMPEFSDLDRLNAHPDVNAINFTGGTAAANAISAAAGYKKLLLELGGNDPLIVMDDGDLEAATTAAINHRFATAGQRCTAAKRLFIHANVYEAFRDLLVEKSSKLVVGDPMKDDTFVGPVINQGAADQIRTLIEQAIEDGASVALGNQYEGAFVYPTILENVSPTSEIMVEEAFGPVMPLYKFESVEEIIPIINNTAYGLQAGVFSQNLATIKELYEQLDVGTLAANDGPGFRTEHFPFGGVKESGIGREGIKYAIREMSYTKTLVI</sequence>
<evidence type="ECO:0000250" key="1"/>
<evidence type="ECO:0000269" key="2">
    <source>
    </source>
</evidence>
<evidence type="ECO:0000305" key="3"/>
<organism>
    <name type="scientific">Neptuniibacter caesariensis</name>
    <dbReference type="NCBI Taxonomy" id="207954"/>
    <lineage>
        <taxon>Bacteria</taxon>
        <taxon>Pseudomonadati</taxon>
        <taxon>Pseudomonadota</taxon>
        <taxon>Gammaproteobacteria</taxon>
        <taxon>Oceanospirillales</taxon>
        <taxon>Oceanospirillaceae</taxon>
        <taxon>Neptuniibacter</taxon>
    </lineage>
</organism>
<gene>
    <name type="primary">safD</name>
    <name type="ORF">MED92_03203</name>
</gene>
<reference key="1">
    <citation type="submission" date="2006-02" db="EMBL/GenBank/DDBJ databases">
        <authorList>
            <person name="Pinhassi J."/>
            <person name="Pedros-Alio C."/>
            <person name="Ferriera S."/>
            <person name="Johnson J."/>
            <person name="Kravitz S."/>
            <person name="Halpern A."/>
            <person name="Remington K."/>
            <person name="Beeson K."/>
            <person name="Tran B."/>
            <person name="Rogers Y.-H."/>
            <person name="Friedman R."/>
            <person name="Venter J.C."/>
        </authorList>
    </citation>
    <scope>NUCLEOTIDE SEQUENCE [LARGE SCALE GENOMIC DNA]</scope>
    <source>
        <strain>MED92</strain>
    </source>
</reference>
<reference key="2">
    <citation type="journal article" date="2008" name="Arch. Microbiol.">
        <title>Sulfoacetate released during the assimilation of taurine-nitrogen by Neptuniibacter caesariensis: purification of sulfoacetaldehyde dehydrogenase.</title>
        <authorList>
            <person name="Krejcik Z."/>
            <person name="Denger K."/>
            <person name="Weinitschke S."/>
            <person name="Hollemeyer K."/>
            <person name="Paces V."/>
            <person name="Cook A.M."/>
            <person name="Smits T.H."/>
        </authorList>
    </citation>
    <scope>PROTEIN SEQUENCE OF 2-8</scope>
    <scope>FUNCTION</scope>
    <scope>CATALYTIC ACTIVITY</scope>
    <scope>BIOPHYSICOCHEMICAL PROPERTIES</scope>
    <scope>SUBUNIT</scope>
    <source>
        <strain>MED92</strain>
    </source>
</reference>
<keyword id="KW-0903">Direct protein sequencing</keyword>
<keyword id="KW-0520">NAD</keyword>
<keyword id="KW-0560">Oxidoreductase</keyword>
<keyword id="KW-1185">Reference proteome</keyword>
<name>SAFD_NEPCE</name>
<accession>Q2BN77</accession>
<feature type="initiator methionine" description="Removed" evidence="2">
    <location>
        <position position="1"/>
    </location>
</feature>
<feature type="chain" id="PRO_0000418499" description="Sulfoacetaldehyde dehydrogenase">
    <location>
        <begin position="2"/>
        <end position="456"/>
    </location>
</feature>
<feature type="active site" evidence="1">
    <location>
        <position position="233"/>
    </location>
</feature>
<feature type="active site" evidence="1">
    <location>
        <position position="267"/>
    </location>
</feature>
<feature type="binding site" evidence="1">
    <location>
        <begin position="213"/>
        <end position="218"/>
    </location>
    <ligand>
        <name>NAD(+)</name>
        <dbReference type="ChEBI" id="CHEBI:57540"/>
    </ligand>
</feature>
<dbReference type="EC" id="1.2.1.73"/>
<dbReference type="EMBL" id="AAOW01000005">
    <property type="protein sequence ID" value="EAR61922.1"/>
    <property type="molecule type" value="Genomic_DNA"/>
</dbReference>
<dbReference type="RefSeq" id="WP_007022657.1">
    <property type="nucleotide sequence ID" value="NZ_CH724127.1"/>
</dbReference>
<dbReference type="SMR" id="Q2BN77"/>
<dbReference type="STRING" id="207954.MED92_03203"/>
<dbReference type="KEGG" id="ag:EAR61922"/>
<dbReference type="eggNOG" id="COG1012">
    <property type="taxonomic scope" value="Bacteria"/>
</dbReference>
<dbReference type="HOGENOM" id="CLU_005391_1_0_6"/>
<dbReference type="OrthoDB" id="9812625at2"/>
<dbReference type="BioCyc" id="MetaCyc:MONOMER-14089"/>
<dbReference type="Proteomes" id="UP000002171">
    <property type="component" value="Unassembled WGS sequence"/>
</dbReference>
<dbReference type="GO" id="GO:0008911">
    <property type="term" value="F:lactaldehyde dehydrogenase (NAD+) activity"/>
    <property type="evidence" value="ECO:0007669"/>
    <property type="project" value="TreeGrafter"/>
</dbReference>
<dbReference type="GO" id="GO:0102984">
    <property type="term" value="F:sulfoacetaldehyde dehydrogenase activity"/>
    <property type="evidence" value="ECO:0007669"/>
    <property type="project" value="UniProtKB-EC"/>
</dbReference>
<dbReference type="CDD" id="cd07146">
    <property type="entry name" value="ALDH_PhpJ"/>
    <property type="match status" value="1"/>
</dbReference>
<dbReference type="Gene3D" id="3.40.605.10">
    <property type="entry name" value="Aldehyde Dehydrogenase, Chain A, domain 1"/>
    <property type="match status" value="1"/>
</dbReference>
<dbReference type="Gene3D" id="3.40.309.10">
    <property type="entry name" value="Aldehyde Dehydrogenase, Chain A, domain 2"/>
    <property type="match status" value="1"/>
</dbReference>
<dbReference type="InterPro" id="IPR016161">
    <property type="entry name" value="Ald_DH/histidinol_DH"/>
</dbReference>
<dbReference type="InterPro" id="IPR016163">
    <property type="entry name" value="Ald_DH_C"/>
</dbReference>
<dbReference type="InterPro" id="IPR016160">
    <property type="entry name" value="Ald_DH_CS_CYS"/>
</dbReference>
<dbReference type="InterPro" id="IPR029510">
    <property type="entry name" value="Ald_DH_CS_GLU"/>
</dbReference>
<dbReference type="InterPro" id="IPR016162">
    <property type="entry name" value="Ald_DH_N"/>
</dbReference>
<dbReference type="InterPro" id="IPR015590">
    <property type="entry name" value="Aldehyde_DH_dom"/>
</dbReference>
<dbReference type="InterPro" id="IPR051020">
    <property type="entry name" value="ALDH-related_metabolic_enz"/>
</dbReference>
<dbReference type="InterPro" id="IPR017656">
    <property type="entry name" value="Put_phosphonoacetaldehyde_DH"/>
</dbReference>
<dbReference type="NCBIfam" id="NF047626">
    <property type="entry name" value="SulfactDhSafD"/>
    <property type="match status" value="1"/>
</dbReference>
<dbReference type="PANTHER" id="PTHR42991">
    <property type="entry name" value="ALDEHYDE DEHYDROGENASE"/>
    <property type="match status" value="1"/>
</dbReference>
<dbReference type="PANTHER" id="PTHR42991:SF1">
    <property type="entry name" value="ALDEHYDE DEHYDROGENASE"/>
    <property type="match status" value="1"/>
</dbReference>
<dbReference type="Pfam" id="PF00171">
    <property type="entry name" value="Aldedh"/>
    <property type="match status" value="1"/>
</dbReference>
<dbReference type="SUPFAM" id="SSF53720">
    <property type="entry name" value="ALDH-like"/>
    <property type="match status" value="1"/>
</dbReference>
<dbReference type="PROSITE" id="PS00070">
    <property type="entry name" value="ALDEHYDE_DEHYDR_CYS"/>
    <property type="match status" value="1"/>
</dbReference>
<dbReference type="PROSITE" id="PS00687">
    <property type="entry name" value="ALDEHYDE_DEHYDR_GLU"/>
    <property type="match status" value="1"/>
</dbReference>
<protein>
    <recommendedName>
        <fullName>Sulfoacetaldehyde dehydrogenase</fullName>
        <ecNumber>1.2.1.73</ecNumber>
    </recommendedName>
</protein>
<proteinExistence type="evidence at protein level"/>